<proteinExistence type="evidence at protein level"/>
<name>EF2_DICDI</name>
<comment type="function">
    <text evidence="2">Catalyzes the GTP-dependent ribosomal translocation step during translation elongation. During this step, the ribosome changes from the pre-translocational (PRE) to the post-translocational (POST) state as the newly formed A-site-bound peptidyl-tRNA and P-site-bound deacylated tRNA move to the P and E sites, respectively. Catalyzes the coordinated movement of the two tRNA molecules, the mRNA and conformational changes in the ribosome.</text>
</comment>
<comment type="catalytic activity">
    <reaction evidence="2">
        <text>GTP + H2O = GDP + phosphate + H(+)</text>
        <dbReference type="Rhea" id="RHEA:19669"/>
        <dbReference type="ChEBI" id="CHEBI:15377"/>
        <dbReference type="ChEBI" id="CHEBI:15378"/>
        <dbReference type="ChEBI" id="CHEBI:37565"/>
        <dbReference type="ChEBI" id="CHEBI:43474"/>
        <dbReference type="ChEBI" id="CHEBI:58189"/>
    </reaction>
    <physiologicalReaction direction="left-to-right" evidence="2">
        <dbReference type="Rhea" id="RHEA:19670"/>
    </physiologicalReaction>
</comment>
<comment type="subcellular location">
    <subcellularLocation>
        <location evidence="2">Cytoplasm</location>
    </subcellularLocation>
</comment>
<comment type="PTM">
    <text evidence="1">Phosphorylation by EF-2 kinase completely inactivates EF-2.</text>
</comment>
<comment type="similarity">
    <text evidence="3">Belongs to the TRAFAC class translation factor GTPase superfamily. Classic translation factor GTPase family. EF-G/EF-2 subfamily.</text>
</comment>
<comment type="sequence caution" evidence="5">
    <conflict type="frameshift">
        <sequence resource="EMBL-CDS" id="AAA33205"/>
    </conflict>
</comment>
<dbReference type="EC" id="3.6.5.-" evidence="2"/>
<dbReference type="EMBL" id="M26017">
    <property type="protein sequence ID" value="AAA33205.1"/>
    <property type="status" value="ALT_FRAME"/>
    <property type="molecule type" value="mRNA"/>
</dbReference>
<dbReference type="EMBL" id="AAFI02000111">
    <property type="protein sequence ID" value="EAL63212.1"/>
    <property type="molecule type" value="Genomic_DNA"/>
</dbReference>
<dbReference type="PIR" id="A34347">
    <property type="entry name" value="A34347"/>
</dbReference>
<dbReference type="RefSeq" id="XP_636721.1">
    <property type="nucleotide sequence ID" value="XM_631629.1"/>
</dbReference>
<dbReference type="SMR" id="P15112"/>
<dbReference type="FunCoup" id="P15112">
    <property type="interactions" value="714"/>
</dbReference>
<dbReference type="STRING" id="44689.P15112"/>
<dbReference type="PaxDb" id="44689-DDB0191363"/>
<dbReference type="EnsemblProtists" id="EAL63212">
    <property type="protein sequence ID" value="EAL63212"/>
    <property type="gene ID" value="DDB_G0288373"/>
</dbReference>
<dbReference type="GeneID" id="8626597"/>
<dbReference type="KEGG" id="ddi:DDB_G0288373"/>
<dbReference type="dictyBase" id="DDB_G0288373">
    <property type="gene designation" value="efbA"/>
</dbReference>
<dbReference type="VEuPathDB" id="AmoebaDB:DDB_G0288373"/>
<dbReference type="eggNOG" id="KOG0469">
    <property type="taxonomic scope" value="Eukaryota"/>
</dbReference>
<dbReference type="HOGENOM" id="CLU_002794_11_2_1"/>
<dbReference type="InParanoid" id="P15112"/>
<dbReference type="OMA" id="ASWNTEN"/>
<dbReference type="PhylomeDB" id="P15112"/>
<dbReference type="Reactome" id="R-DDI-156902">
    <property type="pathway name" value="Peptide chain elongation"/>
</dbReference>
<dbReference type="Reactome" id="R-DDI-5358493">
    <property type="pathway name" value="Synthesis of diphthamide-EEF2"/>
</dbReference>
<dbReference type="Reactome" id="R-DDI-6798695">
    <property type="pathway name" value="Neutrophil degranulation"/>
</dbReference>
<dbReference type="PRO" id="PR:P15112"/>
<dbReference type="Proteomes" id="UP000002195">
    <property type="component" value="Chromosome 5"/>
</dbReference>
<dbReference type="GO" id="GO:0005737">
    <property type="term" value="C:cytoplasm"/>
    <property type="evidence" value="ECO:0000314"/>
    <property type="project" value="dictyBase"/>
</dbReference>
<dbReference type="GO" id="GO:0005829">
    <property type="term" value="C:cytosol"/>
    <property type="evidence" value="ECO:0000318"/>
    <property type="project" value="GO_Central"/>
</dbReference>
<dbReference type="GO" id="GO:0031012">
    <property type="term" value="C:extracellular matrix"/>
    <property type="evidence" value="ECO:0007005"/>
    <property type="project" value="dictyBase"/>
</dbReference>
<dbReference type="GO" id="GO:0045335">
    <property type="term" value="C:phagocytic vesicle"/>
    <property type="evidence" value="ECO:0007005"/>
    <property type="project" value="dictyBase"/>
</dbReference>
<dbReference type="GO" id="GO:1990904">
    <property type="term" value="C:ribonucleoprotein complex"/>
    <property type="evidence" value="ECO:0000318"/>
    <property type="project" value="GO_Central"/>
</dbReference>
<dbReference type="GO" id="GO:0005525">
    <property type="term" value="F:GTP binding"/>
    <property type="evidence" value="ECO:0007669"/>
    <property type="project" value="UniProtKB-KW"/>
</dbReference>
<dbReference type="GO" id="GO:0003924">
    <property type="term" value="F:GTPase activity"/>
    <property type="evidence" value="ECO:0000318"/>
    <property type="project" value="GO_Central"/>
</dbReference>
<dbReference type="GO" id="GO:0043022">
    <property type="term" value="F:ribosome binding"/>
    <property type="evidence" value="ECO:0000318"/>
    <property type="project" value="GO_Central"/>
</dbReference>
<dbReference type="GO" id="GO:0003746">
    <property type="term" value="F:translation elongation factor activity"/>
    <property type="evidence" value="ECO:0000318"/>
    <property type="project" value="GO_Central"/>
</dbReference>
<dbReference type="GO" id="GO:0009617">
    <property type="term" value="P:response to bacterium"/>
    <property type="evidence" value="ECO:0007007"/>
    <property type="project" value="dictyBase"/>
</dbReference>
<dbReference type="GO" id="GO:0030587">
    <property type="term" value="P:sorocarp development"/>
    <property type="evidence" value="ECO:0000315"/>
    <property type="project" value="dictyBase"/>
</dbReference>
<dbReference type="GO" id="GO:0006414">
    <property type="term" value="P:translational elongation"/>
    <property type="evidence" value="ECO:0000318"/>
    <property type="project" value="GO_Central"/>
</dbReference>
<dbReference type="CDD" id="cd01681">
    <property type="entry name" value="aeEF2_snRNP_like_IV"/>
    <property type="match status" value="1"/>
</dbReference>
<dbReference type="CDD" id="cd04096">
    <property type="entry name" value="eEF2_snRNP_like_C"/>
    <property type="match status" value="1"/>
</dbReference>
<dbReference type="CDD" id="cd01885">
    <property type="entry name" value="EF2"/>
    <property type="match status" value="1"/>
</dbReference>
<dbReference type="CDD" id="cd16268">
    <property type="entry name" value="EF2_II"/>
    <property type="match status" value="1"/>
</dbReference>
<dbReference type="CDD" id="cd16261">
    <property type="entry name" value="EF2_snRNP_III"/>
    <property type="match status" value="1"/>
</dbReference>
<dbReference type="FunFam" id="3.90.1430.10:FF:000003">
    <property type="entry name" value="Elongation factor 2"/>
    <property type="match status" value="1"/>
</dbReference>
<dbReference type="FunFam" id="2.40.30.10:FF:000010">
    <property type="entry name" value="Translation elongation factor 2"/>
    <property type="match status" value="1"/>
</dbReference>
<dbReference type="FunFam" id="3.30.230.10:FF:000006">
    <property type="entry name" value="Translation elongation factor 2"/>
    <property type="match status" value="1"/>
</dbReference>
<dbReference type="FunFam" id="3.30.70.240:FF:000003">
    <property type="entry name" value="Translation elongation factor 2"/>
    <property type="match status" value="1"/>
</dbReference>
<dbReference type="FunFam" id="3.30.70.870:FF:000002">
    <property type="entry name" value="Translation elongation factor 2"/>
    <property type="match status" value="1"/>
</dbReference>
<dbReference type="FunFam" id="3.40.50.300:FF:000058">
    <property type="entry name" value="Translation elongation factor 2"/>
    <property type="match status" value="1"/>
</dbReference>
<dbReference type="Gene3D" id="3.30.230.10">
    <property type="match status" value="1"/>
</dbReference>
<dbReference type="Gene3D" id="3.30.70.240">
    <property type="match status" value="1"/>
</dbReference>
<dbReference type="Gene3D" id="3.30.70.870">
    <property type="entry name" value="Elongation Factor G (Translational Gtpase), domain 3"/>
    <property type="match status" value="1"/>
</dbReference>
<dbReference type="Gene3D" id="3.40.50.300">
    <property type="entry name" value="P-loop containing nucleotide triphosphate hydrolases"/>
    <property type="match status" value="1"/>
</dbReference>
<dbReference type="Gene3D" id="2.40.30.10">
    <property type="entry name" value="Translation factors"/>
    <property type="match status" value="1"/>
</dbReference>
<dbReference type="InterPro" id="IPR041095">
    <property type="entry name" value="EFG_II"/>
</dbReference>
<dbReference type="InterPro" id="IPR035647">
    <property type="entry name" value="EFG_III/V"/>
</dbReference>
<dbReference type="InterPro" id="IPR000640">
    <property type="entry name" value="EFG_V-like"/>
</dbReference>
<dbReference type="InterPro" id="IPR004161">
    <property type="entry name" value="EFTu-like_2"/>
</dbReference>
<dbReference type="InterPro" id="IPR027417">
    <property type="entry name" value="P-loop_NTPase"/>
</dbReference>
<dbReference type="InterPro" id="IPR020568">
    <property type="entry name" value="Ribosomal_Su5_D2-typ_SF"/>
</dbReference>
<dbReference type="InterPro" id="IPR014721">
    <property type="entry name" value="Ribsml_uS5_D2-typ_fold_subgr"/>
</dbReference>
<dbReference type="InterPro" id="IPR005225">
    <property type="entry name" value="Small_GTP-bd"/>
</dbReference>
<dbReference type="InterPro" id="IPR000795">
    <property type="entry name" value="T_Tr_GTP-bd_dom"/>
</dbReference>
<dbReference type="InterPro" id="IPR009000">
    <property type="entry name" value="Transl_B-barrel_sf"/>
</dbReference>
<dbReference type="InterPro" id="IPR005517">
    <property type="entry name" value="Transl_elong_EFG/EF2_IV"/>
</dbReference>
<dbReference type="NCBIfam" id="TIGR00231">
    <property type="entry name" value="small_GTP"/>
    <property type="match status" value="1"/>
</dbReference>
<dbReference type="PANTHER" id="PTHR42908:SF10">
    <property type="entry name" value="EUKARYOTIC TRANSLATION ELONGATION FACTOR 2"/>
    <property type="match status" value="1"/>
</dbReference>
<dbReference type="PANTHER" id="PTHR42908">
    <property type="entry name" value="TRANSLATION ELONGATION FACTOR-RELATED"/>
    <property type="match status" value="1"/>
</dbReference>
<dbReference type="Pfam" id="PF00679">
    <property type="entry name" value="EFG_C"/>
    <property type="match status" value="1"/>
</dbReference>
<dbReference type="Pfam" id="PF14492">
    <property type="entry name" value="EFG_III"/>
    <property type="match status" value="1"/>
</dbReference>
<dbReference type="Pfam" id="PF03764">
    <property type="entry name" value="EFG_IV"/>
    <property type="match status" value="1"/>
</dbReference>
<dbReference type="Pfam" id="PF00009">
    <property type="entry name" value="GTP_EFTU"/>
    <property type="match status" value="1"/>
</dbReference>
<dbReference type="Pfam" id="PF03144">
    <property type="entry name" value="GTP_EFTU_D2"/>
    <property type="match status" value="1"/>
</dbReference>
<dbReference type="PRINTS" id="PR00315">
    <property type="entry name" value="ELONGATNFCT"/>
</dbReference>
<dbReference type="SMART" id="SM00838">
    <property type="entry name" value="EFG_C"/>
    <property type="match status" value="1"/>
</dbReference>
<dbReference type="SMART" id="SM00889">
    <property type="entry name" value="EFG_IV"/>
    <property type="match status" value="1"/>
</dbReference>
<dbReference type="SUPFAM" id="SSF54980">
    <property type="entry name" value="EF-G C-terminal domain-like"/>
    <property type="match status" value="2"/>
</dbReference>
<dbReference type="SUPFAM" id="SSF52540">
    <property type="entry name" value="P-loop containing nucleoside triphosphate hydrolases"/>
    <property type="match status" value="1"/>
</dbReference>
<dbReference type="SUPFAM" id="SSF54211">
    <property type="entry name" value="Ribosomal protein S5 domain 2-like"/>
    <property type="match status" value="1"/>
</dbReference>
<dbReference type="SUPFAM" id="SSF50447">
    <property type="entry name" value="Translation proteins"/>
    <property type="match status" value="1"/>
</dbReference>
<dbReference type="PROSITE" id="PS51722">
    <property type="entry name" value="G_TR_2"/>
    <property type="match status" value="1"/>
</dbReference>
<organism>
    <name type="scientific">Dictyostelium discoideum</name>
    <name type="common">Social amoeba</name>
    <dbReference type="NCBI Taxonomy" id="44689"/>
    <lineage>
        <taxon>Eukaryota</taxon>
        <taxon>Amoebozoa</taxon>
        <taxon>Evosea</taxon>
        <taxon>Eumycetozoa</taxon>
        <taxon>Dictyostelia</taxon>
        <taxon>Dictyosteliales</taxon>
        <taxon>Dictyosteliaceae</taxon>
        <taxon>Dictyostelium</taxon>
    </lineage>
</organism>
<protein>
    <recommendedName>
        <fullName>Elongation factor 2</fullName>
        <shortName>EF-2</shortName>
        <ecNumber evidence="2">3.6.5.-</ecNumber>
    </recommendedName>
</protein>
<sequence>MVNFTIDQIRAIMDRRENIRNMSVIAHVDHGKTTLSDSLIQRAGIIADKVSGDMRYMSCRADEQERGITIKSSSVSLHFEMPKEDKLPAGCTSHEFLINLIDSPGHVDFSSEVTAALRVTDGALVVIDCVEGVCVQTETVLRQAVAERIKPVLFVNKVDRFLLELQLNTEEAYLSFRRAIESVNVIVGNTEDKEFGDVTVSPEKGTVAFGSGLHGWGFTLGRFAKLYAAKFGVPEDKLMGRLWGDSYFDATAKKWTSNPQSADGKALPRAFCQFVLEPIYQLTRAIVDEDAVKLEKMMKTLQITLAPEDAEIKGKQLVKAVMRKFLPAADAILSMIVTHLPSPLVAQKYRCANLYEGPMDDECAVAIQKCDPNGPLMMYVSKMVPTSDKGRFYAFGRVFSGIIRTGQKVRIMGVNYVPGKKDDLFLKSIQRTVLMMGRKTEQIEDCPCGNIVGLVGVDQFLVKSGTITTSEVAHNIRVMKFSVSPVVRVAVEPKNPSDLPKLVEGLKRLAKSDPCVLCYSEESGEHIVAGAGELHLEICLKDLAEDHAGIEIKTTDPVVSFRESVSEESSIMCLSKSPNKHNRLFMKASPISMELQDLIEAGSDISSKDDPKARANYLADNHEWDKNDAMNIWSFGPEGNGANLLVNVTKGVQYLNEIKDSFVGAFQWATKEGVVCDENMRGIRFNLYDVTLHTDAIHRGGGQIIPTARRVLYAAELTASPTLLEPIYLVEITAPENAIGGIYSVLNRRRGIVIGEERRIGSPLFSVKAHLPVLESFGFTADLRSHTAGQAFPQCVFDHWASIGVVNKDKKATEVALATRKRKGLAPEIPDLDKFHEKL</sequence>
<reference key="1">
    <citation type="journal article" date="1989" name="J. Biol. Chem.">
        <title>Structure and expression of elongation factor 2 gene during development of Dictyostelium discoideum.</title>
        <authorList>
            <person name="Toda K."/>
            <person name="Tasaka M."/>
            <person name="Mashima K."/>
            <person name="Kohno K."/>
            <person name="Uchida T."/>
            <person name="Takeuchi I."/>
        </authorList>
    </citation>
    <scope>NUCLEOTIDE SEQUENCE [MRNA]</scope>
</reference>
<reference key="2">
    <citation type="journal article" date="2005" name="Nature">
        <title>The genome of the social amoeba Dictyostelium discoideum.</title>
        <authorList>
            <person name="Eichinger L."/>
            <person name="Pachebat J.A."/>
            <person name="Gloeckner G."/>
            <person name="Rajandream M.A."/>
            <person name="Sucgang R."/>
            <person name="Berriman M."/>
            <person name="Song J."/>
            <person name="Olsen R."/>
            <person name="Szafranski K."/>
            <person name="Xu Q."/>
            <person name="Tunggal B."/>
            <person name="Kummerfeld S."/>
            <person name="Madera M."/>
            <person name="Konfortov B.A."/>
            <person name="Rivero F."/>
            <person name="Bankier A.T."/>
            <person name="Lehmann R."/>
            <person name="Hamlin N."/>
            <person name="Davies R."/>
            <person name="Gaudet P."/>
            <person name="Fey P."/>
            <person name="Pilcher K."/>
            <person name="Chen G."/>
            <person name="Saunders D."/>
            <person name="Sodergren E.J."/>
            <person name="Davis P."/>
            <person name="Kerhornou A."/>
            <person name="Nie X."/>
            <person name="Hall N."/>
            <person name="Anjard C."/>
            <person name="Hemphill L."/>
            <person name="Bason N."/>
            <person name="Farbrother P."/>
            <person name="Desany B."/>
            <person name="Just E."/>
            <person name="Morio T."/>
            <person name="Rost R."/>
            <person name="Churcher C.M."/>
            <person name="Cooper J."/>
            <person name="Haydock S."/>
            <person name="van Driessche N."/>
            <person name="Cronin A."/>
            <person name="Goodhead I."/>
            <person name="Muzny D.M."/>
            <person name="Mourier T."/>
            <person name="Pain A."/>
            <person name="Lu M."/>
            <person name="Harper D."/>
            <person name="Lindsay R."/>
            <person name="Hauser H."/>
            <person name="James K.D."/>
            <person name="Quiles M."/>
            <person name="Madan Babu M."/>
            <person name="Saito T."/>
            <person name="Buchrieser C."/>
            <person name="Wardroper A."/>
            <person name="Felder M."/>
            <person name="Thangavelu M."/>
            <person name="Johnson D."/>
            <person name="Knights A."/>
            <person name="Loulseged H."/>
            <person name="Mungall K.L."/>
            <person name="Oliver K."/>
            <person name="Price C."/>
            <person name="Quail M.A."/>
            <person name="Urushihara H."/>
            <person name="Hernandez J."/>
            <person name="Rabbinowitsch E."/>
            <person name="Steffen D."/>
            <person name="Sanders M."/>
            <person name="Ma J."/>
            <person name="Kohara Y."/>
            <person name="Sharp S."/>
            <person name="Simmonds M.N."/>
            <person name="Spiegler S."/>
            <person name="Tivey A."/>
            <person name="Sugano S."/>
            <person name="White B."/>
            <person name="Walker D."/>
            <person name="Woodward J.R."/>
            <person name="Winckler T."/>
            <person name="Tanaka Y."/>
            <person name="Shaulsky G."/>
            <person name="Schleicher M."/>
            <person name="Weinstock G.M."/>
            <person name="Rosenthal A."/>
            <person name="Cox E.C."/>
            <person name="Chisholm R.L."/>
            <person name="Gibbs R.A."/>
            <person name="Loomis W.F."/>
            <person name="Platzer M."/>
            <person name="Kay R.R."/>
            <person name="Williams J.G."/>
            <person name="Dear P.H."/>
            <person name="Noegel A.A."/>
            <person name="Barrell B.G."/>
            <person name="Kuspa A."/>
        </authorList>
    </citation>
    <scope>NUCLEOTIDE SEQUENCE [LARGE SCALE GENOMIC DNA]</scope>
    <source>
        <strain>AX4</strain>
    </source>
</reference>
<reference key="3">
    <citation type="submission" date="2007-07" db="UniProtKB">
        <authorList>
            <person name="Bienvenut W.V."/>
            <person name="Patel H."/>
            <person name="Brunton V.G."/>
            <person name="Frame M.C."/>
        </authorList>
    </citation>
    <scope>PROTEIN SEQUENCE OF 2-10; 33-55; 285-293; 300-315; 464-477; 481-488; 700-709; 760-768 AND 812-820</scope>
    <scope>CLEAVAGE OF INITIATOR METHIONINE</scope>
    <scope>IDENTIFICATION BY MASS SPECTROMETRY</scope>
</reference>
<reference key="4">
    <citation type="journal article" date="2006" name="Mol. Cell. Proteomics">
        <title>Proteomics fingerprinting of phagosome maturation and evidence for the role of a Galpha during uptake.</title>
        <authorList>
            <person name="Gotthardt D."/>
            <person name="Blancheteau V."/>
            <person name="Bosserhoff A."/>
            <person name="Ruppert T."/>
            <person name="Delorenzi M."/>
            <person name="Soldati T."/>
        </authorList>
    </citation>
    <scope>IDENTIFICATION BY MASS SPECTROMETRY [LARGE SCALE ANALYSIS]</scope>
    <source>
        <strain>AX2</strain>
    </source>
</reference>
<evidence type="ECO:0000250" key="1">
    <source>
        <dbReference type="UniProtKB" id="P13639"/>
    </source>
</evidence>
<evidence type="ECO:0000250" key="2">
    <source>
        <dbReference type="UniProtKB" id="P32324"/>
    </source>
</evidence>
<evidence type="ECO:0000255" key="3">
    <source>
        <dbReference type="PROSITE-ProRule" id="PRU01059"/>
    </source>
</evidence>
<evidence type="ECO:0000269" key="4">
    <source ref="3"/>
</evidence>
<evidence type="ECO:0000305" key="5"/>
<keyword id="KW-0963">Cytoplasm</keyword>
<keyword id="KW-0903">Direct protein sequencing</keyword>
<keyword id="KW-0251">Elongation factor</keyword>
<keyword id="KW-0342">GTP-binding</keyword>
<keyword id="KW-0378">Hydrolase</keyword>
<keyword id="KW-0547">Nucleotide-binding</keyword>
<keyword id="KW-0597">Phosphoprotein</keyword>
<keyword id="KW-0648">Protein biosynthesis</keyword>
<keyword id="KW-1185">Reference proteome</keyword>
<feature type="initiator methionine" description="Removed" evidence="4">
    <location>
        <position position="1"/>
    </location>
</feature>
<feature type="chain" id="PRO_0000091011" description="Elongation factor 2">
    <location>
        <begin position="2"/>
        <end position="839"/>
    </location>
</feature>
<feature type="domain" description="tr-type G" evidence="3">
    <location>
        <begin position="17"/>
        <end position="248"/>
    </location>
</feature>
<feature type="binding site" evidence="2">
    <location>
        <begin position="26"/>
        <end position="33"/>
    </location>
    <ligand>
        <name>GTP</name>
        <dbReference type="ChEBI" id="CHEBI:37565"/>
    </ligand>
</feature>
<feature type="binding site" evidence="2">
    <location>
        <begin position="156"/>
        <end position="159"/>
    </location>
    <ligand>
        <name>GTP</name>
        <dbReference type="ChEBI" id="CHEBI:37565"/>
    </ligand>
</feature>
<feature type="binding site" evidence="2">
    <location>
        <begin position="211"/>
        <end position="213"/>
    </location>
    <ligand>
        <name>GTP</name>
        <dbReference type="ChEBI" id="CHEBI:37565"/>
    </ligand>
</feature>
<feature type="modified residue" description="Diphthamide" evidence="2">
    <location>
        <position position="698"/>
    </location>
</feature>
<feature type="sequence conflict" description="In Ref. 1; AAA33205." evidence="5" ref="1">
    <original>V</original>
    <variation>D</variation>
    <location>
        <position position="233"/>
    </location>
</feature>
<feature type="sequence conflict" description="In Ref. 1; AAA33205." evidence="5" ref="1">
    <location>
        <begin position="566"/>
        <end position="586"/>
    </location>
</feature>
<feature type="sequence conflict" description="In Ref. 1; AAA33205." evidence="5" ref="1">
    <original>FG</original>
    <variation>LR</variation>
    <location>
        <begin position="777"/>
        <end position="778"/>
    </location>
</feature>
<feature type="sequence conflict" description="In Ref. 1; AAA33205." evidence="5" ref="1">
    <original>D</original>
    <variation>A</variation>
    <location>
        <position position="831"/>
    </location>
</feature>
<feature type="sequence conflict" description="In Ref. 1; AAA33205." evidence="5" ref="1">
    <original>EKL</original>
    <variation>RKTINNLSHTLSFQI</variation>
    <location>
        <begin position="837"/>
        <end position="839"/>
    </location>
</feature>
<accession>P15112</accession>
<accession>Q54J09</accession>
<gene>
    <name type="primary">efbA</name>
    <name type="ORF">DDB_G0288373</name>
</gene>